<sequence>MAELPQSRINERNITSEMRESFLDYAMSVIVARALPDVRDGLKPVHRRILYGLNEQGMTPDKSYKKSARIVGDVMGKYHPHGDLSIYEAMVRMAQDFSYRYPLVDGQGNFGSMDGDGAAAMRYTEARMTKITLELLRDINKDTIDFIDNYDGNEREPSVLPARFPNLLANGASGIAVGMATNIPPHNLTELINGVLSLSKNPDISIAELMEDIEGPDFPTAGLILGKSGIRRAYETGRGSIQMRSRAVIEERGGGRQRIVVTEIPFQVNKARMIEKIAELVRDKKIDGITDLRDETSLRTGVRVVIDVRKDANASVILNNLYKQTPLQTSFGVNMIALVNGRPKLINLKEALVHYLEHQKTVVRRRTQYNLRKAKDRAHILEGLRIALDHIDEIISTIRESETDKVAMESLQQRFKLSEKQAQAILDMRLRRLTGLERDKIEAEYNELLNYISELEAILADEEVLLQLVRDELTEIRDRFGDDRRTEIQLGGFEDLEDEDLIPEEQIVITLSHNNYIKRLPVSTYRAQNRGGRGVQGMNTLEEDFVSQLVTLSTHDHVLFFTNKGRVYKLKGYEVPELSRQSKGIPVVNAIELENDEIISTMIAVKDLESEDNFLVFATKRGVVKRSALSNFSRINRNGKIAISFREDDELIAVRLTSGQEDILIGTSHASLIRFPESTLRPLGRTATGVKGITLREGDEVVGLDVAHANSVDEVLVVTENGYGKRTPVNDYRLSNRGGKGIKTATITERNGNVVCITTVTGEEDLMIVTNAGVIIRLDVADISQNGRAAQGVRLIRLGDDQFVSTVAKVKEDADEENEDEQSTVSEDGTEQQREAVVNDETPGNAIHTEVIDSEVNDEDGRIEVRQDFMDRVEEDIQQSSDDDEE</sequence>
<gene>
    <name evidence="1" type="primary">gyrA</name>
    <name type="ordered locus">SAR0006</name>
</gene>
<comment type="function">
    <text evidence="1">A type II topoisomerase that negatively supercoils closed circular double-stranded (ds) DNA in an ATP-dependent manner to modulate DNA topology and maintain chromosomes in an underwound state. Negative supercoiling favors strand separation, and DNA replication, transcription, recombination and repair, all of which involve strand separation. Also able to catalyze the interconversion of other topological isomers of dsDNA rings, including catenanes and knotted rings. Type II topoisomerases break and join 2 DNA strands simultaneously in an ATP-dependent manner.</text>
</comment>
<comment type="catalytic activity">
    <reaction evidence="1">
        <text>ATP-dependent breakage, passage and rejoining of double-stranded DNA.</text>
        <dbReference type="EC" id="5.6.2.2"/>
    </reaction>
</comment>
<comment type="subunit">
    <text evidence="1">Heterotetramer, composed of two GyrA and two GyrB chains. In the heterotetramer, GyrA contains the active site tyrosine that forms a transient covalent intermediate with DNA, while GyrB binds cofactors and catalyzes ATP hydrolysis.</text>
</comment>
<comment type="subcellular location">
    <subcellularLocation>
        <location evidence="1">Cytoplasm</location>
    </subcellularLocation>
</comment>
<comment type="miscellaneous">
    <text evidence="1">Few gyrases are as efficient as E.coli at forming negative supercoils. Not all organisms have 2 type II topoisomerases; in organisms with a single type II topoisomerase this enzyme also has to decatenate newly replicated chromosomes.</text>
</comment>
<comment type="similarity">
    <text evidence="1">Belongs to the type II topoisomerase GyrA/ParC subunit family.</text>
</comment>
<name>GYRA_STAAR</name>
<evidence type="ECO:0000255" key="1">
    <source>
        <dbReference type="HAMAP-Rule" id="MF_01897"/>
    </source>
</evidence>
<evidence type="ECO:0000255" key="2">
    <source>
        <dbReference type="PROSITE-ProRule" id="PRU01384"/>
    </source>
</evidence>
<evidence type="ECO:0000256" key="3">
    <source>
        <dbReference type="SAM" id="MobiDB-lite"/>
    </source>
</evidence>
<protein>
    <recommendedName>
        <fullName evidence="1">DNA gyrase subunit A</fullName>
        <ecNumber evidence="1">5.6.2.2</ecNumber>
    </recommendedName>
</protein>
<accession>Q6GKT9</accession>
<proteinExistence type="inferred from homology"/>
<organism>
    <name type="scientific">Staphylococcus aureus (strain MRSA252)</name>
    <dbReference type="NCBI Taxonomy" id="282458"/>
    <lineage>
        <taxon>Bacteria</taxon>
        <taxon>Bacillati</taxon>
        <taxon>Bacillota</taxon>
        <taxon>Bacilli</taxon>
        <taxon>Bacillales</taxon>
        <taxon>Staphylococcaceae</taxon>
        <taxon>Staphylococcus</taxon>
    </lineage>
</organism>
<keyword id="KW-0046">Antibiotic resistance</keyword>
<keyword id="KW-0067">ATP-binding</keyword>
<keyword id="KW-0963">Cytoplasm</keyword>
<keyword id="KW-0238">DNA-binding</keyword>
<keyword id="KW-0413">Isomerase</keyword>
<keyword id="KW-0547">Nucleotide-binding</keyword>
<keyword id="KW-0799">Topoisomerase</keyword>
<feature type="chain" id="PRO_0000145255" description="DNA gyrase subunit A">
    <location>
        <begin position="1"/>
        <end position="886"/>
    </location>
</feature>
<feature type="domain" description="Topo IIA-type catalytic" evidence="2">
    <location>
        <begin position="35"/>
        <end position="501"/>
    </location>
</feature>
<feature type="region of interest" description="Disordered" evidence="3">
    <location>
        <begin position="810"/>
        <end position="860"/>
    </location>
</feature>
<feature type="short sequence motif" description="GyrA-box" evidence="1">
    <location>
        <begin position="528"/>
        <end position="534"/>
    </location>
</feature>
<feature type="compositionally biased region" description="Acidic residues" evidence="3">
    <location>
        <begin position="813"/>
        <end position="822"/>
    </location>
</feature>
<feature type="active site" description="O-(5'-phospho-DNA)-tyrosine intermediate" evidence="1">
    <location>
        <position position="123"/>
    </location>
</feature>
<dbReference type="EC" id="5.6.2.2" evidence="1"/>
<dbReference type="EMBL" id="BX571856">
    <property type="protein sequence ID" value="CAG39034.1"/>
    <property type="molecule type" value="Genomic_DNA"/>
</dbReference>
<dbReference type="RefSeq" id="WP_000819069.1">
    <property type="nucleotide sequence ID" value="NC_002952.2"/>
</dbReference>
<dbReference type="SMR" id="Q6GKT9"/>
<dbReference type="KEGG" id="sar:SAR0006"/>
<dbReference type="HOGENOM" id="CLU_002977_6_1_9"/>
<dbReference type="Proteomes" id="UP000000596">
    <property type="component" value="Chromosome"/>
</dbReference>
<dbReference type="GO" id="GO:0005694">
    <property type="term" value="C:chromosome"/>
    <property type="evidence" value="ECO:0007669"/>
    <property type="project" value="InterPro"/>
</dbReference>
<dbReference type="GO" id="GO:0005737">
    <property type="term" value="C:cytoplasm"/>
    <property type="evidence" value="ECO:0007669"/>
    <property type="project" value="UniProtKB-SubCell"/>
</dbReference>
<dbReference type="GO" id="GO:0009330">
    <property type="term" value="C:DNA topoisomerase type II (double strand cut, ATP-hydrolyzing) complex"/>
    <property type="evidence" value="ECO:0007669"/>
    <property type="project" value="TreeGrafter"/>
</dbReference>
<dbReference type="GO" id="GO:0005524">
    <property type="term" value="F:ATP binding"/>
    <property type="evidence" value="ECO:0007669"/>
    <property type="project" value="UniProtKB-UniRule"/>
</dbReference>
<dbReference type="GO" id="GO:0003677">
    <property type="term" value="F:DNA binding"/>
    <property type="evidence" value="ECO:0007669"/>
    <property type="project" value="UniProtKB-UniRule"/>
</dbReference>
<dbReference type="GO" id="GO:0034335">
    <property type="term" value="F:DNA negative supercoiling activity"/>
    <property type="evidence" value="ECO:0007669"/>
    <property type="project" value="UniProtKB-ARBA"/>
</dbReference>
<dbReference type="GO" id="GO:0006265">
    <property type="term" value="P:DNA topological change"/>
    <property type="evidence" value="ECO:0007669"/>
    <property type="project" value="UniProtKB-UniRule"/>
</dbReference>
<dbReference type="GO" id="GO:0006261">
    <property type="term" value="P:DNA-templated DNA replication"/>
    <property type="evidence" value="ECO:0007669"/>
    <property type="project" value="UniProtKB-UniRule"/>
</dbReference>
<dbReference type="GO" id="GO:0046677">
    <property type="term" value="P:response to antibiotic"/>
    <property type="evidence" value="ECO:0007669"/>
    <property type="project" value="UniProtKB-KW"/>
</dbReference>
<dbReference type="CDD" id="cd00187">
    <property type="entry name" value="TOP4c"/>
    <property type="match status" value="1"/>
</dbReference>
<dbReference type="FunFam" id="1.10.268.10:FF:000001">
    <property type="entry name" value="DNA gyrase subunit A"/>
    <property type="match status" value="1"/>
</dbReference>
<dbReference type="FunFam" id="2.120.10.90:FF:000004">
    <property type="entry name" value="DNA gyrase subunit A"/>
    <property type="match status" value="1"/>
</dbReference>
<dbReference type="FunFam" id="3.30.1360.40:FF:000002">
    <property type="entry name" value="DNA gyrase subunit A"/>
    <property type="match status" value="1"/>
</dbReference>
<dbReference type="FunFam" id="3.90.199.10:FF:000001">
    <property type="entry name" value="DNA gyrase subunit A"/>
    <property type="match status" value="1"/>
</dbReference>
<dbReference type="Gene3D" id="3.30.1360.40">
    <property type="match status" value="1"/>
</dbReference>
<dbReference type="Gene3D" id="2.120.10.90">
    <property type="entry name" value="DNA gyrase/topoisomerase IV, subunit A, C-terminal"/>
    <property type="match status" value="1"/>
</dbReference>
<dbReference type="Gene3D" id="3.90.199.10">
    <property type="entry name" value="Topoisomerase II, domain 5"/>
    <property type="match status" value="1"/>
</dbReference>
<dbReference type="Gene3D" id="1.10.268.10">
    <property type="entry name" value="Topoisomerase, domain 3"/>
    <property type="match status" value="1"/>
</dbReference>
<dbReference type="HAMAP" id="MF_01897">
    <property type="entry name" value="GyrA"/>
    <property type="match status" value="1"/>
</dbReference>
<dbReference type="InterPro" id="IPR005743">
    <property type="entry name" value="GyrA"/>
</dbReference>
<dbReference type="InterPro" id="IPR006691">
    <property type="entry name" value="GyrA/parC_rep"/>
</dbReference>
<dbReference type="InterPro" id="IPR035516">
    <property type="entry name" value="Gyrase/topoIV_suA_C"/>
</dbReference>
<dbReference type="InterPro" id="IPR013760">
    <property type="entry name" value="Topo_IIA-like_dom_sf"/>
</dbReference>
<dbReference type="InterPro" id="IPR013758">
    <property type="entry name" value="Topo_IIA_A/C_ab"/>
</dbReference>
<dbReference type="InterPro" id="IPR013757">
    <property type="entry name" value="Topo_IIA_A_a_sf"/>
</dbReference>
<dbReference type="InterPro" id="IPR002205">
    <property type="entry name" value="Topo_IIA_dom_A"/>
</dbReference>
<dbReference type="InterPro" id="IPR050220">
    <property type="entry name" value="Type_II_DNA_Topoisomerases"/>
</dbReference>
<dbReference type="NCBIfam" id="TIGR01063">
    <property type="entry name" value="gyrA"/>
    <property type="match status" value="1"/>
</dbReference>
<dbReference type="NCBIfam" id="NF004043">
    <property type="entry name" value="PRK05560.1"/>
    <property type="match status" value="1"/>
</dbReference>
<dbReference type="NCBIfam" id="NF004044">
    <property type="entry name" value="PRK05561.1"/>
    <property type="match status" value="1"/>
</dbReference>
<dbReference type="PANTHER" id="PTHR43493:SF5">
    <property type="entry name" value="DNA GYRASE SUBUNIT A, CHLOROPLASTIC_MITOCHONDRIAL"/>
    <property type="match status" value="1"/>
</dbReference>
<dbReference type="PANTHER" id="PTHR43493">
    <property type="entry name" value="DNA GYRASE/TOPOISOMERASE SUBUNIT A"/>
    <property type="match status" value="1"/>
</dbReference>
<dbReference type="Pfam" id="PF03989">
    <property type="entry name" value="DNA_gyraseA_C"/>
    <property type="match status" value="6"/>
</dbReference>
<dbReference type="Pfam" id="PF00521">
    <property type="entry name" value="DNA_topoisoIV"/>
    <property type="match status" value="1"/>
</dbReference>
<dbReference type="SMART" id="SM00434">
    <property type="entry name" value="TOP4c"/>
    <property type="match status" value="1"/>
</dbReference>
<dbReference type="SUPFAM" id="SSF101904">
    <property type="entry name" value="GyrA/ParC C-terminal domain-like"/>
    <property type="match status" value="1"/>
</dbReference>
<dbReference type="SUPFAM" id="SSF56719">
    <property type="entry name" value="Type II DNA topoisomerase"/>
    <property type="match status" value="1"/>
</dbReference>
<dbReference type="PROSITE" id="PS52040">
    <property type="entry name" value="TOPO_IIA"/>
    <property type="match status" value="1"/>
</dbReference>
<reference key="1">
    <citation type="journal article" date="2004" name="Proc. Natl. Acad. Sci. U.S.A.">
        <title>Complete genomes of two clinical Staphylococcus aureus strains: evidence for the rapid evolution of virulence and drug resistance.</title>
        <authorList>
            <person name="Holden M.T.G."/>
            <person name="Feil E.J."/>
            <person name="Lindsay J.A."/>
            <person name="Peacock S.J."/>
            <person name="Day N.P.J."/>
            <person name="Enright M.C."/>
            <person name="Foster T.J."/>
            <person name="Moore C.E."/>
            <person name="Hurst L."/>
            <person name="Atkin R."/>
            <person name="Barron A."/>
            <person name="Bason N."/>
            <person name="Bentley S.D."/>
            <person name="Chillingworth C."/>
            <person name="Chillingworth T."/>
            <person name="Churcher C."/>
            <person name="Clark L."/>
            <person name="Corton C."/>
            <person name="Cronin A."/>
            <person name="Doggett J."/>
            <person name="Dowd L."/>
            <person name="Feltwell T."/>
            <person name="Hance Z."/>
            <person name="Harris B."/>
            <person name="Hauser H."/>
            <person name="Holroyd S."/>
            <person name="Jagels K."/>
            <person name="James K.D."/>
            <person name="Lennard N."/>
            <person name="Line A."/>
            <person name="Mayes R."/>
            <person name="Moule S."/>
            <person name="Mungall K."/>
            <person name="Ormond D."/>
            <person name="Quail M.A."/>
            <person name="Rabbinowitsch E."/>
            <person name="Rutherford K.M."/>
            <person name="Sanders M."/>
            <person name="Sharp S."/>
            <person name="Simmonds M."/>
            <person name="Stevens K."/>
            <person name="Whitehead S."/>
            <person name="Barrell B.G."/>
            <person name="Spratt B.G."/>
            <person name="Parkhill J."/>
        </authorList>
    </citation>
    <scope>NUCLEOTIDE SEQUENCE [LARGE SCALE GENOMIC DNA]</scope>
    <source>
        <strain>MRSA252</strain>
    </source>
</reference>